<protein>
    <recommendedName>
        <fullName>CASP-like protein 1A1</fullName>
        <shortName>AtCASPL1A1</shortName>
    </recommendedName>
</protein>
<sequence>MEEAKHNEAEEAQGIEAREAKQIEAGETSRSSRKLITFEPKLVINKGISVLGFVLRLFAVFGTIGSALAMGTTHESVVSLSQLVLLKVKYSDLPTLMFFVVANAISGGYLVLSLPVSIFHIFSTQAKTSRIILLVVDTVMLALVSSGASAATATVYLAHEGNTTANWPPICQQFDGFCERISGSLIGSFCAVILLMLIVINSAISLSRH</sequence>
<name>CSPL2_ARATH</name>
<gene>
    <name type="ordered locus">At1g14160</name>
    <name type="ORF">F7A19.24</name>
</gene>
<reference key="1">
    <citation type="journal article" date="2000" name="Nature">
        <title>Sequence and analysis of chromosome 1 of the plant Arabidopsis thaliana.</title>
        <authorList>
            <person name="Theologis A."/>
            <person name="Ecker J.R."/>
            <person name="Palm C.J."/>
            <person name="Federspiel N.A."/>
            <person name="Kaul S."/>
            <person name="White O."/>
            <person name="Alonso J."/>
            <person name="Altafi H."/>
            <person name="Araujo R."/>
            <person name="Bowman C.L."/>
            <person name="Brooks S.Y."/>
            <person name="Buehler E."/>
            <person name="Chan A."/>
            <person name="Chao Q."/>
            <person name="Chen H."/>
            <person name="Cheuk R.F."/>
            <person name="Chin C.W."/>
            <person name="Chung M.K."/>
            <person name="Conn L."/>
            <person name="Conway A.B."/>
            <person name="Conway A.R."/>
            <person name="Creasy T.H."/>
            <person name="Dewar K."/>
            <person name="Dunn P."/>
            <person name="Etgu P."/>
            <person name="Feldblyum T.V."/>
            <person name="Feng J.-D."/>
            <person name="Fong B."/>
            <person name="Fujii C.Y."/>
            <person name="Gill J.E."/>
            <person name="Goldsmith A.D."/>
            <person name="Haas B."/>
            <person name="Hansen N.F."/>
            <person name="Hughes B."/>
            <person name="Huizar L."/>
            <person name="Hunter J.L."/>
            <person name="Jenkins J."/>
            <person name="Johnson-Hopson C."/>
            <person name="Khan S."/>
            <person name="Khaykin E."/>
            <person name="Kim C.J."/>
            <person name="Koo H.L."/>
            <person name="Kremenetskaia I."/>
            <person name="Kurtz D.B."/>
            <person name="Kwan A."/>
            <person name="Lam B."/>
            <person name="Langin-Hooper S."/>
            <person name="Lee A."/>
            <person name="Lee J.M."/>
            <person name="Lenz C.A."/>
            <person name="Li J.H."/>
            <person name="Li Y.-P."/>
            <person name="Lin X."/>
            <person name="Liu S.X."/>
            <person name="Liu Z.A."/>
            <person name="Luros J.S."/>
            <person name="Maiti R."/>
            <person name="Marziali A."/>
            <person name="Militscher J."/>
            <person name="Miranda M."/>
            <person name="Nguyen M."/>
            <person name="Nierman W.C."/>
            <person name="Osborne B.I."/>
            <person name="Pai G."/>
            <person name="Peterson J."/>
            <person name="Pham P.K."/>
            <person name="Rizzo M."/>
            <person name="Rooney T."/>
            <person name="Rowley D."/>
            <person name="Sakano H."/>
            <person name="Salzberg S.L."/>
            <person name="Schwartz J.R."/>
            <person name="Shinn P."/>
            <person name="Southwick A.M."/>
            <person name="Sun H."/>
            <person name="Tallon L.J."/>
            <person name="Tambunga G."/>
            <person name="Toriumi M.J."/>
            <person name="Town C.D."/>
            <person name="Utterback T."/>
            <person name="Van Aken S."/>
            <person name="Vaysberg M."/>
            <person name="Vysotskaia V.S."/>
            <person name="Walker M."/>
            <person name="Wu D."/>
            <person name="Yu G."/>
            <person name="Fraser C.M."/>
            <person name="Venter J.C."/>
            <person name="Davis R.W."/>
        </authorList>
    </citation>
    <scope>NUCLEOTIDE SEQUENCE [LARGE SCALE GENOMIC DNA]</scope>
    <source>
        <strain>cv. Columbia</strain>
    </source>
</reference>
<reference key="2">
    <citation type="journal article" date="2017" name="Plant J.">
        <title>Araport11: a complete reannotation of the Arabidopsis thaliana reference genome.</title>
        <authorList>
            <person name="Cheng C.Y."/>
            <person name="Krishnakumar V."/>
            <person name="Chan A.P."/>
            <person name="Thibaud-Nissen F."/>
            <person name="Schobel S."/>
            <person name="Town C.D."/>
        </authorList>
    </citation>
    <scope>GENOME REANNOTATION</scope>
    <source>
        <strain>cv. Columbia</strain>
    </source>
</reference>
<reference key="3">
    <citation type="journal article" date="2002" name="Science">
        <title>Functional annotation of a full-length Arabidopsis cDNA collection.</title>
        <authorList>
            <person name="Seki M."/>
            <person name="Narusaka M."/>
            <person name="Kamiya A."/>
            <person name="Ishida J."/>
            <person name="Satou M."/>
            <person name="Sakurai T."/>
            <person name="Nakajima M."/>
            <person name="Enju A."/>
            <person name="Akiyama K."/>
            <person name="Oono Y."/>
            <person name="Muramatsu M."/>
            <person name="Hayashizaki Y."/>
            <person name="Kawai J."/>
            <person name="Carninci P."/>
            <person name="Itoh M."/>
            <person name="Ishii Y."/>
            <person name="Arakawa T."/>
            <person name="Shibata K."/>
            <person name="Shinagawa A."/>
            <person name="Shinozaki K."/>
        </authorList>
    </citation>
    <scope>NUCLEOTIDE SEQUENCE [LARGE SCALE MRNA]</scope>
    <source>
        <strain>cv. Columbia</strain>
    </source>
</reference>
<reference key="4">
    <citation type="journal article" date="2003" name="Science">
        <title>Empirical analysis of transcriptional activity in the Arabidopsis genome.</title>
        <authorList>
            <person name="Yamada K."/>
            <person name="Lim J."/>
            <person name="Dale J.M."/>
            <person name="Chen H."/>
            <person name="Shinn P."/>
            <person name="Palm C.J."/>
            <person name="Southwick A.M."/>
            <person name="Wu H.C."/>
            <person name="Kim C.J."/>
            <person name="Nguyen M."/>
            <person name="Pham P.K."/>
            <person name="Cheuk R.F."/>
            <person name="Karlin-Newmann G."/>
            <person name="Liu S.X."/>
            <person name="Lam B."/>
            <person name="Sakano H."/>
            <person name="Wu T."/>
            <person name="Yu G."/>
            <person name="Miranda M."/>
            <person name="Quach H.L."/>
            <person name="Tripp M."/>
            <person name="Chang C.H."/>
            <person name="Lee J.M."/>
            <person name="Toriumi M.J."/>
            <person name="Chan M.M."/>
            <person name="Tang C.C."/>
            <person name="Onodera C.S."/>
            <person name="Deng J.M."/>
            <person name="Akiyama K."/>
            <person name="Ansari Y."/>
            <person name="Arakawa T."/>
            <person name="Banh J."/>
            <person name="Banno F."/>
            <person name="Bowser L."/>
            <person name="Brooks S.Y."/>
            <person name="Carninci P."/>
            <person name="Chao Q."/>
            <person name="Choy N."/>
            <person name="Enju A."/>
            <person name="Goldsmith A.D."/>
            <person name="Gurjal M."/>
            <person name="Hansen N.F."/>
            <person name="Hayashizaki Y."/>
            <person name="Johnson-Hopson C."/>
            <person name="Hsuan V.W."/>
            <person name="Iida K."/>
            <person name="Karnes M."/>
            <person name="Khan S."/>
            <person name="Koesema E."/>
            <person name="Ishida J."/>
            <person name="Jiang P.X."/>
            <person name="Jones T."/>
            <person name="Kawai J."/>
            <person name="Kamiya A."/>
            <person name="Meyers C."/>
            <person name="Nakajima M."/>
            <person name="Narusaka M."/>
            <person name="Seki M."/>
            <person name="Sakurai T."/>
            <person name="Satou M."/>
            <person name="Tamse R."/>
            <person name="Vaysberg M."/>
            <person name="Wallender E.K."/>
            <person name="Wong C."/>
            <person name="Yamamura Y."/>
            <person name="Yuan S."/>
            <person name="Shinozaki K."/>
            <person name="Davis R.W."/>
            <person name="Theologis A."/>
            <person name="Ecker J.R."/>
        </authorList>
    </citation>
    <scope>NUCLEOTIDE SEQUENCE [LARGE SCALE MRNA]</scope>
    <source>
        <strain>cv. Columbia</strain>
    </source>
</reference>
<reference key="5">
    <citation type="journal article" date="2014" name="Plant Physiol.">
        <title>Functional and evolutionary analysis of the CASPARIAN STRIP MEMBRANE DOMAIN PROTEIN family.</title>
        <authorList>
            <person name="Roppolo D."/>
            <person name="Boeckmann B."/>
            <person name="Pfister A."/>
            <person name="Boutet E."/>
            <person name="Rubio M.C."/>
            <person name="Denervaud-Tendon V."/>
            <person name="Vermeer J.E."/>
            <person name="Gheyselinck J."/>
            <person name="Xenarios I."/>
            <person name="Geldner N."/>
        </authorList>
    </citation>
    <scope>TISSUE SPECIFICITY</scope>
    <scope>DEVELOPMENTAL STAGE</scope>
    <scope>SUBCELLULAR LOCATION</scope>
    <scope>GENE FAMILY</scope>
    <scope>NOMENCLATURE</scope>
</reference>
<dbReference type="EMBL" id="AC007576">
    <property type="protein sequence ID" value="AAD39301.1"/>
    <property type="molecule type" value="Genomic_DNA"/>
</dbReference>
<dbReference type="EMBL" id="CP002684">
    <property type="protein sequence ID" value="AEE29113.1"/>
    <property type="molecule type" value="Genomic_DNA"/>
</dbReference>
<dbReference type="EMBL" id="AK117303">
    <property type="protein sequence ID" value="BAC41974.1"/>
    <property type="molecule type" value="mRNA"/>
</dbReference>
<dbReference type="EMBL" id="BT006211">
    <property type="protein sequence ID" value="AAP12860.1"/>
    <property type="molecule type" value="mRNA"/>
</dbReference>
<dbReference type="PIR" id="B86275">
    <property type="entry name" value="B86275"/>
</dbReference>
<dbReference type="RefSeq" id="NP_172868.1">
    <property type="nucleotide sequence ID" value="NM_101281.3"/>
</dbReference>
<dbReference type="STRING" id="3702.Q9XI72"/>
<dbReference type="GlyGen" id="Q9XI72">
    <property type="glycosylation" value="1 site"/>
</dbReference>
<dbReference type="PaxDb" id="3702-AT1G14160.1"/>
<dbReference type="ProteomicsDB" id="224432"/>
<dbReference type="EnsemblPlants" id="AT1G14160.1">
    <property type="protein sequence ID" value="AT1G14160.1"/>
    <property type="gene ID" value="AT1G14160"/>
</dbReference>
<dbReference type="GeneID" id="837975"/>
<dbReference type="Gramene" id="AT1G14160.1">
    <property type="protein sequence ID" value="AT1G14160.1"/>
    <property type="gene ID" value="AT1G14160"/>
</dbReference>
<dbReference type="KEGG" id="ath:AT1G14160"/>
<dbReference type="Araport" id="AT1G14160"/>
<dbReference type="TAIR" id="AT1G14160">
    <property type="gene designation" value="CASPL1A1"/>
</dbReference>
<dbReference type="eggNOG" id="ENOG502SN29">
    <property type="taxonomic scope" value="Eukaryota"/>
</dbReference>
<dbReference type="HOGENOM" id="CLU_066104_3_2_1"/>
<dbReference type="InParanoid" id="Q9XI72"/>
<dbReference type="OMA" id="MLIVINS"/>
<dbReference type="OrthoDB" id="753675at2759"/>
<dbReference type="PhylomeDB" id="Q9XI72"/>
<dbReference type="PRO" id="PR:Q9XI72"/>
<dbReference type="Proteomes" id="UP000006548">
    <property type="component" value="Chromosome 1"/>
</dbReference>
<dbReference type="ExpressionAtlas" id="Q9XI72">
    <property type="expression patterns" value="baseline and differential"/>
</dbReference>
<dbReference type="GO" id="GO:0005886">
    <property type="term" value="C:plasma membrane"/>
    <property type="evidence" value="ECO:0000314"/>
    <property type="project" value="UniProtKB"/>
</dbReference>
<dbReference type="InterPro" id="IPR006459">
    <property type="entry name" value="CASP/CASPL"/>
</dbReference>
<dbReference type="InterPro" id="IPR006702">
    <property type="entry name" value="CASP_dom"/>
</dbReference>
<dbReference type="InterPro" id="IPR044173">
    <property type="entry name" value="CASPL"/>
</dbReference>
<dbReference type="NCBIfam" id="TIGR01569">
    <property type="entry name" value="A_tha_TIGR01569"/>
    <property type="match status" value="1"/>
</dbReference>
<dbReference type="PANTHER" id="PTHR36488:SF12">
    <property type="entry name" value="CASP-LIKE PROTEIN"/>
    <property type="match status" value="1"/>
</dbReference>
<dbReference type="PANTHER" id="PTHR36488">
    <property type="entry name" value="CASP-LIKE PROTEIN 1U1"/>
    <property type="match status" value="1"/>
</dbReference>
<dbReference type="Pfam" id="PF04535">
    <property type="entry name" value="CASP_dom"/>
    <property type="match status" value="1"/>
</dbReference>
<comment type="subunit">
    <text evidence="1">Homodimer and heterodimers.</text>
</comment>
<comment type="subcellular location">
    <subcellularLocation>
        <location evidence="4">Cell membrane</location>
        <topology evidence="4">Multi-pass membrane protein</topology>
    </subcellularLocation>
</comment>
<comment type="tissue specificity">
    <text evidence="4">Expressed in the root endodermis.</text>
</comment>
<comment type="developmental stage">
    <text evidence="4">In the root endodermis, expressed at a late developmental stage, coinciding with the appearance of metaxylem vessels. In 10-day-old roots, reduced levels in proximity to the hypocotyl and in endodermal cells overlaying lateral root primordia.</text>
</comment>
<comment type="similarity">
    <text evidence="5">Belongs to the Casparian strip membrane proteins (CASP) family.</text>
</comment>
<accession>Q9XI72</accession>
<keyword id="KW-1003">Cell membrane</keyword>
<keyword id="KW-0325">Glycoprotein</keyword>
<keyword id="KW-0472">Membrane</keyword>
<keyword id="KW-1185">Reference proteome</keyword>
<keyword id="KW-0812">Transmembrane</keyword>
<keyword id="KW-1133">Transmembrane helix</keyword>
<feature type="chain" id="PRO_0000308652" description="CASP-like protein 1A1">
    <location>
        <begin position="1"/>
        <end position="209"/>
    </location>
</feature>
<feature type="topological domain" description="Cytoplasmic" evidence="2">
    <location>
        <begin position="1"/>
        <end position="49"/>
    </location>
</feature>
<feature type="transmembrane region" description="Helical" evidence="2">
    <location>
        <begin position="50"/>
        <end position="70"/>
    </location>
</feature>
<feature type="topological domain" description="Extracellular" evidence="2">
    <location>
        <begin position="71"/>
        <end position="95"/>
    </location>
</feature>
<feature type="transmembrane region" description="Helical" evidence="2">
    <location>
        <begin position="96"/>
        <end position="116"/>
    </location>
</feature>
<feature type="topological domain" description="Cytoplasmic" evidence="2">
    <location>
        <begin position="117"/>
        <end position="130"/>
    </location>
</feature>
<feature type="transmembrane region" description="Helical" evidence="2">
    <location>
        <begin position="131"/>
        <end position="151"/>
    </location>
</feature>
<feature type="topological domain" description="Extracellular" evidence="2">
    <location>
        <begin position="152"/>
        <end position="183"/>
    </location>
</feature>
<feature type="transmembrane region" description="Helical" evidence="2">
    <location>
        <begin position="184"/>
        <end position="204"/>
    </location>
</feature>
<feature type="topological domain" description="Cytoplasmic" evidence="2">
    <location>
        <begin position="205"/>
        <end position="209"/>
    </location>
</feature>
<feature type="region of interest" description="Disordered" evidence="3">
    <location>
        <begin position="1"/>
        <end position="26"/>
    </location>
</feature>
<feature type="glycosylation site" description="N-linked (GlcNAc...) asparagine" evidence="2">
    <location>
        <position position="162"/>
    </location>
</feature>
<evidence type="ECO:0000250" key="1"/>
<evidence type="ECO:0000255" key="2"/>
<evidence type="ECO:0000256" key="3">
    <source>
        <dbReference type="SAM" id="MobiDB-lite"/>
    </source>
</evidence>
<evidence type="ECO:0000269" key="4">
    <source>
    </source>
</evidence>
<evidence type="ECO:0000305" key="5"/>
<organism>
    <name type="scientific">Arabidopsis thaliana</name>
    <name type="common">Mouse-ear cress</name>
    <dbReference type="NCBI Taxonomy" id="3702"/>
    <lineage>
        <taxon>Eukaryota</taxon>
        <taxon>Viridiplantae</taxon>
        <taxon>Streptophyta</taxon>
        <taxon>Embryophyta</taxon>
        <taxon>Tracheophyta</taxon>
        <taxon>Spermatophyta</taxon>
        <taxon>Magnoliopsida</taxon>
        <taxon>eudicotyledons</taxon>
        <taxon>Gunneridae</taxon>
        <taxon>Pentapetalae</taxon>
        <taxon>rosids</taxon>
        <taxon>malvids</taxon>
        <taxon>Brassicales</taxon>
        <taxon>Brassicaceae</taxon>
        <taxon>Camelineae</taxon>
        <taxon>Arabidopsis</taxon>
    </lineage>
</organism>
<proteinExistence type="evidence at transcript level"/>